<accession>Q50LE6</accession>
<evidence type="ECO:0000255" key="1"/>
<organism>
    <name type="scientific">Human picobirnavirus (strain Human/Thailand/Hy005102/-)</name>
    <name type="common">PBV</name>
    <dbReference type="NCBI Taxonomy" id="647332"/>
    <lineage>
        <taxon>Viruses</taxon>
        <taxon>Riboviria</taxon>
        <taxon>Orthornavirae</taxon>
        <taxon>Pisuviricota</taxon>
        <taxon>Duplopiviricetes</taxon>
        <taxon>Durnavirales</taxon>
        <taxon>Picobirnaviridae</taxon>
        <taxon>Orthopicobirnavirus</taxon>
        <taxon>Orthopicobirnavirus hominis</taxon>
    </lineage>
</organism>
<feature type="chain" id="PRO_0000379524" description="Uncharacterized ORF1 protein">
    <location>
        <begin position="1"/>
        <end position="224"/>
    </location>
</feature>
<feature type="coiled-coil region" evidence="1">
    <location>
        <begin position="108"/>
        <end position="137"/>
    </location>
</feature>
<proteinExistence type="predicted"/>
<sequence length="224" mass="24934">MTANQIAYQKHLETARVNAVGEMQRGLELDESRRHNISQEQLKTRELTELERSNRAVEKETSRHNVVTETETRRSNLAREWETYRSNSAREMETQRSNISYEAIKRGQLALDRAELNESIRATNENLALQYSKLQTESLLTQRGQDLQHKNAIIGASANAFGSLLGYSTASADRASREEIASANRKSQEHIASMQVLGSMANTMFSSVSNLVGKTAGAFAGGLS</sequence>
<name>ORF1_HPBVH</name>
<keyword id="KW-0175">Coiled coil</keyword>
<keyword id="KW-1185">Reference proteome</keyword>
<dbReference type="EMBL" id="AB186897">
    <property type="protein sequence ID" value="BAD98234.1"/>
    <property type="molecule type" value="Genomic_RNA"/>
</dbReference>
<dbReference type="RefSeq" id="YP_239359.1">
    <property type="nucleotide sequence ID" value="NC_007026.1"/>
</dbReference>
<dbReference type="KEGG" id="vg:5075906"/>
<dbReference type="Proteomes" id="UP000007252">
    <property type="component" value="Genome"/>
</dbReference>
<protein>
    <recommendedName>
        <fullName>Uncharacterized ORF1 protein</fullName>
    </recommendedName>
</protein>
<reference key="1">
    <citation type="journal article" date="2005" name="J. Virol. Methods">
        <title>Complete nucleotide sequences of two RNA segments of human picobirnavirus.</title>
        <authorList>
            <person name="Wakuda M."/>
            <person name="Pongsuwanna Y."/>
            <person name="Taniguchi K."/>
        </authorList>
    </citation>
    <scope>NUCLEOTIDE SEQUENCE [GENOMIC RNA]</scope>
</reference>
<gene>
    <name type="primary">Segment-1</name>
    <name type="ORF">ORF1</name>
</gene>
<organismHost>
    <name type="scientific">Homo sapiens</name>
    <name type="common">Human</name>
    <dbReference type="NCBI Taxonomy" id="9606"/>
</organismHost>